<feature type="chain" id="PRO_0000257211" description="UDP-N-acetylmuramoylalanine--D-glutamate ligase">
    <location>
        <begin position="1"/>
        <end position="450"/>
    </location>
</feature>
<feature type="binding site" evidence="1">
    <location>
        <begin position="115"/>
        <end position="121"/>
    </location>
    <ligand>
        <name>ATP</name>
        <dbReference type="ChEBI" id="CHEBI:30616"/>
    </ligand>
</feature>
<proteinExistence type="inferred from homology"/>
<reference key="1">
    <citation type="submission" date="2005-10" db="EMBL/GenBank/DDBJ databases">
        <title>Complete sequence of Pelobacter carbinolicus DSM 2380.</title>
        <authorList>
            <person name="Copeland A."/>
            <person name="Lucas S."/>
            <person name="Lapidus A."/>
            <person name="Barry K."/>
            <person name="Detter J.C."/>
            <person name="Glavina T."/>
            <person name="Hammon N."/>
            <person name="Israni S."/>
            <person name="Pitluck S."/>
            <person name="Chertkov O."/>
            <person name="Schmutz J."/>
            <person name="Larimer F."/>
            <person name="Land M."/>
            <person name="Kyrpides N."/>
            <person name="Ivanova N."/>
            <person name="Richardson P."/>
        </authorList>
    </citation>
    <scope>NUCLEOTIDE SEQUENCE [LARGE SCALE GENOMIC DNA]</scope>
    <source>
        <strain>DSM 2380 / NBRC 103641 / GraBd1</strain>
    </source>
</reference>
<evidence type="ECO:0000255" key="1">
    <source>
        <dbReference type="HAMAP-Rule" id="MF_00639"/>
    </source>
</evidence>
<dbReference type="EC" id="6.3.2.9" evidence="1"/>
<dbReference type="EMBL" id="CP000142">
    <property type="protein sequence ID" value="ABA89443.1"/>
    <property type="molecule type" value="Genomic_DNA"/>
</dbReference>
<dbReference type="RefSeq" id="WP_011341958.1">
    <property type="nucleotide sequence ID" value="NC_007498.2"/>
</dbReference>
<dbReference type="SMR" id="Q3A2G4"/>
<dbReference type="STRING" id="338963.Pcar_2204"/>
<dbReference type="KEGG" id="pca:Pcar_2204"/>
<dbReference type="eggNOG" id="COG0771">
    <property type="taxonomic scope" value="Bacteria"/>
</dbReference>
<dbReference type="HOGENOM" id="CLU_032540_0_0_7"/>
<dbReference type="OrthoDB" id="9809796at2"/>
<dbReference type="UniPathway" id="UPA00219"/>
<dbReference type="Proteomes" id="UP000002534">
    <property type="component" value="Chromosome"/>
</dbReference>
<dbReference type="GO" id="GO:0005737">
    <property type="term" value="C:cytoplasm"/>
    <property type="evidence" value="ECO:0007669"/>
    <property type="project" value="UniProtKB-SubCell"/>
</dbReference>
<dbReference type="GO" id="GO:0005524">
    <property type="term" value="F:ATP binding"/>
    <property type="evidence" value="ECO:0007669"/>
    <property type="project" value="UniProtKB-UniRule"/>
</dbReference>
<dbReference type="GO" id="GO:0008764">
    <property type="term" value="F:UDP-N-acetylmuramoylalanine-D-glutamate ligase activity"/>
    <property type="evidence" value="ECO:0007669"/>
    <property type="project" value="UniProtKB-UniRule"/>
</dbReference>
<dbReference type="GO" id="GO:0051301">
    <property type="term" value="P:cell division"/>
    <property type="evidence" value="ECO:0007669"/>
    <property type="project" value="UniProtKB-KW"/>
</dbReference>
<dbReference type="GO" id="GO:0071555">
    <property type="term" value="P:cell wall organization"/>
    <property type="evidence" value="ECO:0007669"/>
    <property type="project" value="UniProtKB-KW"/>
</dbReference>
<dbReference type="GO" id="GO:0009252">
    <property type="term" value="P:peptidoglycan biosynthetic process"/>
    <property type="evidence" value="ECO:0007669"/>
    <property type="project" value="UniProtKB-UniRule"/>
</dbReference>
<dbReference type="GO" id="GO:0008360">
    <property type="term" value="P:regulation of cell shape"/>
    <property type="evidence" value="ECO:0007669"/>
    <property type="project" value="UniProtKB-KW"/>
</dbReference>
<dbReference type="Gene3D" id="3.90.190.20">
    <property type="entry name" value="Mur ligase, C-terminal domain"/>
    <property type="match status" value="1"/>
</dbReference>
<dbReference type="Gene3D" id="3.40.1190.10">
    <property type="entry name" value="Mur-like, catalytic domain"/>
    <property type="match status" value="1"/>
</dbReference>
<dbReference type="Gene3D" id="3.40.50.720">
    <property type="entry name" value="NAD(P)-binding Rossmann-like Domain"/>
    <property type="match status" value="1"/>
</dbReference>
<dbReference type="HAMAP" id="MF_00639">
    <property type="entry name" value="MurD"/>
    <property type="match status" value="1"/>
</dbReference>
<dbReference type="InterPro" id="IPR036565">
    <property type="entry name" value="Mur-like_cat_sf"/>
</dbReference>
<dbReference type="InterPro" id="IPR004101">
    <property type="entry name" value="Mur_ligase_C"/>
</dbReference>
<dbReference type="InterPro" id="IPR036615">
    <property type="entry name" value="Mur_ligase_C_dom_sf"/>
</dbReference>
<dbReference type="InterPro" id="IPR013221">
    <property type="entry name" value="Mur_ligase_cen"/>
</dbReference>
<dbReference type="InterPro" id="IPR005762">
    <property type="entry name" value="MurD"/>
</dbReference>
<dbReference type="NCBIfam" id="TIGR01087">
    <property type="entry name" value="murD"/>
    <property type="match status" value="1"/>
</dbReference>
<dbReference type="PANTHER" id="PTHR43692">
    <property type="entry name" value="UDP-N-ACETYLMURAMOYLALANINE--D-GLUTAMATE LIGASE"/>
    <property type="match status" value="1"/>
</dbReference>
<dbReference type="PANTHER" id="PTHR43692:SF1">
    <property type="entry name" value="UDP-N-ACETYLMURAMOYLALANINE--D-GLUTAMATE LIGASE"/>
    <property type="match status" value="1"/>
</dbReference>
<dbReference type="Pfam" id="PF02875">
    <property type="entry name" value="Mur_ligase_C"/>
    <property type="match status" value="1"/>
</dbReference>
<dbReference type="Pfam" id="PF08245">
    <property type="entry name" value="Mur_ligase_M"/>
    <property type="match status" value="1"/>
</dbReference>
<dbReference type="Pfam" id="PF21799">
    <property type="entry name" value="MurD-like_N"/>
    <property type="match status" value="1"/>
</dbReference>
<dbReference type="SUPFAM" id="SSF51984">
    <property type="entry name" value="MurCD N-terminal domain"/>
    <property type="match status" value="1"/>
</dbReference>
<dbReference type="SUPFAM" id="SSF53623">
    <property type="entry name" value="MurD-like peptide ligases, catalytic domain"/>
    <property type="match status" value="1"/>
</dbReference>
<dbReference type="SUPFAM" id="SSF53244">
    <property type="entry name" value="MurD-like peptide ligases, peptide-binding domain"/>
    <property type="match status" value="1"/>
</dbReference>
<gene>
    <name evidence="1" type="primary">murD</name>
    <name type="ordered locus">Pcar_2204</name>
</gene>
<organism>
    <name type="scientific">Syntrophotalea carbinolica (strain DSM 2380 / NBRC 103641 / GraBd1)</name>
    <name type="common">Pelobacter carbinolicus</name>
    <dbReference type="NCBI Taxonomy" id="338963"/>
    <lineage>
        <taxon>Bacteria</taxon>
        <taxon>Pseudomonadati</taxon>
        <taxon>Thermodesulfobacteriota</taxon>
        <taxon>Desulfuromonadia</taxon>
        <taxon>Desulfuromonadales</taxon>
        <taxon>Syntrophotaleaceae</taxon>
        <taxon>Syntrophotalea</taxon>
    </lineage>
</organism>
<sequence length="450" mass="47868">MAEYSGKHVVVVGAGCTGLGLARFFLDRGALVTLSDSRSREELVDVAELADHGLRFDCGGHDAALLAGADLIAISPGIPLTVPAVAGALQAGVPVQGEIEIAARELSAPMVAITGTNGKSTTTCLMGEIMRCWGRRAFVGGNLGTPLIEATRSTDWDWIVAEISSFQLEAIDTFRPRYGMLLNLTADHLDRYAGMGEYVAAKLRLFENMTAEDVAVVNADDALVVRSTTDLPCRKIPFSSSRVLDEGMGFDGQHIVWRHAGRQERFDVADLQLKGLHNVENVMAALIPPLMEGCPTDIAWKAVCGFSGLDHRMVLVREIDGVSWYDDSKGTNVGSVVKSLAGLQGPVTLIAGGKDKGGDYAPLAGLIGEKVEHLILIGQAADRMQAAFQGMTTILRADSLEAAVQQAQQVTMAGGTVLLSPGCSSFDMFRSYAERGEVFCRAVQALQGNG</sequence>
<comment type="function">
    <text evidence="1">Cell wall formation. Catalyzes the addition of glutamate to the nucleotide precursor UDP-N-acetylmuramoyl-L-alanine (UMA).</text>
</comment>
<comment type="catalytic activity">
    <reaction evidence="1">
        <text>UDP-N-acetyl-alpha-D-muramoyl-L-alanine + D-glutamate + ATP = UDP-N-acetyl-alpha-D-muramoyl-L-alanyl-D-glutamate + ADP + phosphate + H(+)</text>
        <dbReference type="Rhea" id="RHEA:16429"/>
        <dbReference type="ChEBI" id="CHEBI:15378"/>
        <dbReference type="ChEBI" id="CHEBI:29986"/>
        <dbReference type="ChEBI" id="CHEBI:30616"/>
        <dbReference type="ChEBI" id="CHEBI:43474"/>
        <dbReference type="ChEBI" id="CHEBI:83898"/>
        <dbReference type="ChEBI" id="CHEBI:83900"/>
        <dbReference type="ChEBI" id="CHEBI:456216"/>
        <dbReference type="EC" id="6.3.2.9"/>
    </reaction>
</comment>
<comment type="pathway">
    <text evidence="1">Cell wall biogenesis; peptidoglycan biosynthesis.</text>
</comment>
<comment type="subcellular location">
    <subcellularLocation>
        <location evidence="1">Cytoplasm</location>
    </subcellularLocation>
</comment>
<comment type="similarity">
    <text evidence="1">Belongs to the MurCDEF family.</text>
</comment>
<name>MURD_SYNC1</name>
<protein>
    <recommendedName>
        <fullName evidence="1">UDP-N-acetylmuramoylalanine--D-glutamate ligase</fullName>
        <ecNumber evidence="1">6.3.2.9</ecNumber>
    </recommendedName>
    <alternativeName>
        <fullName evidence="1">D-glutamic acid-adding enzyme</fullName>
    </alternativeName>
    <alternativeName>
        <fullName evidence="1">UDP-N-acetylmuramoyl-L-alanyl-D-glutamate synthetase</fullName>
    </alternativeName>
</protein>
<keyword id="KW-0067">ATP-binding</keyword>
<keyword id="KW-0131">Cell cycle</keyword>
<keyword id="KW-0132">Cell division</keyword>
<keyword id="KW-0133">Cell shape</keyword>
<keyword id="KW-0961">Cell wall biogenesis/degradation</keyword>
<keyword id="KW-0963">Cytoplasm</keyword>
<keyword id="KW-0436">Ligase</keyword>
<keyword id="KW-0547">Nucleotide-binding</keyword>
<keyword id="KW-0573">Peptidoglycan synthesis</keyword>
<keyword id="KW-1185">Reference proteome</keyword>
<accession>Q3A2G4</accession>